<accession>A0A0G2EAR7</accession>
<dbReference type="EC" id="2.4.1.-" evidence="3"/>
<dbReference type="EMBL" id="LCWF01000101">
    <property type="protein sequence ID" value="KKY20072.1"/>
    <property type="molecule type" value="Genomic_DNA"/>
</dbReference>
<dbReference type="SMR" id="A0A0G2EAR7"/>
<dbReference type="OrthoDB" id="5835829at2759"/>
<dbReference type="Proteomes" id="UP000053317">
    <property type="component" value="Unassembled WGS sequence"/>
</dbReference>
<dbReference type="GO" id="GO:0016020">
    <property type="term" value="C:membrane"/>
    <property type="evidence" value="ECO:0007669"/>
    <property type="project" value="UniProtKB-SubCell"/>
</dbReference>
<dbReference type="GO" id="GO:0008194">
    <property type="term" value="F:UDP-glycosyltransferase activity"/>
    <property type="evidence" value="ECO:0007669"/>
    <property type="project" value="InterPro"/>
</dbReference>
<dbReference type="CDD" id="cd03784">
    <property type="entry name" value="GT1_Gtf-like"/>
    <property type="match status" value="1"/>
</dbReference>
<dbReference type="Gene3D" id="3.40.50.2000">
    <property type="entry name" value="Glycogen Phosphorylase B"/>
    <property type="match status" value="1"/>
</dbReference>
<dbReference type="InterPro" id="IPR050271">
    <property type="entry name" value="UDP-glycosyltransferase"/>
</dbReference>
<dbReference type="InterPro" id="IPR002213">
    <property type="entry name" value="UDP_glucos_trans"/>
</dbReference>
<dbReference type="InterPro" id="IPR035595">
    <property type="entry name" value="UDP_glycos_trans_CS"/>
</dbReference>
<dbReference type="PANTHER" id="PTHR48043">
    <property type="entry name" value="EG:EG0003.4 PROTEIN-RELATED"/>
    <property type="match status" value="1"/>
</dbReference>
<dbReference type="PANTHER" id="PTHR48043:SF145">
    <property type="entry name" value="FI06409P-RELATED"/>
    <property type="match status" value="1"/>
</dbReference>
<dbReference type="Pfam" id="PF00201">
    <property type="entry name" value="UDPGT"/>
    <property type="match status" value="1"/>
</dbReference>
<dbReference type="SUPFAM" id="SSF53756">
    <property type="entry name" value="UDP-Glycosyltransferase/glycogen phosphorylase"/>
    <property type="match status" value="1"/>
</dbReference>
<dbReference type="PROSITE" id="PS00375">
    <property type="entry name" value="UDPGT"/>
    <property type="match status" value="1"/>
</dbReference>
<evidence type="ECO:0000255" key="1"/>
<evidence type="ECO:0000255" key="2">
    <source>
        <dbReference type="PROSITE-ProRule" id="PRU00498"/>
    </source>
</evidence>
<evidence type="ECO:0000269" key="3">
    <source>
    </source>
</evidence>
<evidence type="ECO:0000303" key="4">
    <source>
    </source>
</evidence>
<evidence type="ECO:0000305" key="5"/>
<protein>
    <recommendedName>
        <fullName evidence="4">UDP-glycosyltransferase 1</fullName>
        <ecNumber evidence="3">2.4.1.-</ecNumber>
    </recommendedName>
    <alternativeName>
        <fullName evidence="4">O-glycosyltransferase 1</fullName>
        <shortName evidence="4">OGT1</shortName>
    </alternativeName>
</protein>
<name>OGT1_PHACM</name>
<sequence length="482" mass="54619">MLNKDANGFQDLDPQYSFISKVHIIASKIKPEDDEKLHSILDESDIRDWESRKGLAKVLQFMERSWIETHKNLRALISKERPDFIFGDLLDQQACVDMRNEFNIPMAIHFGQMPFHLAPAKYIPGLPGFQQRYLTSEHASIWGRISEDFFALGLVFSLRHHFRWRKQMRDQAGAAPLAFSRKPDSLILVNTFFGFEPPKELPPLLVPVGPILSDNYSPLTPELESFLSTHKNVLYIAFGSHINLTGGSRFTKLFDGINSAIQSGFIDGVVWTLKPPKTSSSSSNPLPNFDPKFYHITPFAPQRAILAHPSTTLFLSHCGASSINEALFHGVPILGLPIYNDQFKYALCIENVGVGLKMDKTDFEAKEVHQKIGRMTTEPSFQQDSKRMMGIARIAARRKHLAADLIEEELLDHEGRFSLSSKSDVRHRRPPHLQTASARMSWFRAGNYDIYLVYALVLGSAWWIGKTILGTGIKLAMGKWLR</sequence>
<organism>
    <name type="scientific">Phaeomoniella chlamydospora</name>
    <name type="common">Phaeoacremonium chlamydosporum</name>
    <dbReference type="NCBI Taxonomy" id="158046"/>
    <lineage>
        <taxon>Eukaryota</taxon>
        <taxon>Fungi</taxon>
        <taxon>Dikarya</taxon>
        <taxon>Ascomycota</taxon>
        <taxon>Pezizomycotina</taxon>
        <taxon>Eurotiomycetes</taxon>
        <taxon>Chaetothyriomycetidae</taxon>
        <taxon>Phaeomoniellales</taxon>
        <taxon>Phaeomoniellaceae</taxon>
        <taxon>Phaeomoniella</taxon>
    </lineage>
</organism>
<gene>
    <name type="ORF">UCRPC4_g04261</name>
</gene>
<proteinExistence type="evidence at protein level"/>
<reference key="1">
    <citation type="journal article" date="2015" name="BMC Genomics">
        <title>Distinctive expansion of gene families associated with plant cell wall degradation, secondary metabolism, and nutrient uptake in the genomes of grapevine trunk pathogens.</title>
        <authorList>
            <person name="Morales-Cruz A."/>
            <person name="Amrine K.C."/>
            <person name="Blanco-Ulate B."/>
            <person name="Lawrence D.P."/>
            <person name="Travadon R."/>
            <person name="Rolshausen P.E."/>
            <person name="Baumgartner K."/>
            <person name="Cantu D."/>
        </authorList>
    </citation>
    <scope>NUCLEOTIDE SEQUENCE [LARGE SCALE GENOMIC DNA]</scope>
    <source>
        <strain>UCRPC4</strain>
    </source>
</reference>
<reference key="2">
    <citation type="journal article" date="2024" name="J. Am. Chem. Soc.">
        <title>Targeted discovery of glycosylated natural products by tailoring enzyme-guided genome mining and MS-based metabolome analysis.</title>
        <authorList>
            <person name="Chen D."/>
            <person name="Song Z."/>
            <person name="Han J."/>
            <person name="Liu J."/>
            <person name="Liu H."/>
            <person name="Dai J."/>
        </authorList>
    </citation>
    <scope>FUNCTION</scope>
    <scope>CATALYTIC ACTIVITY</scope>
    <scope>PATHWAY</scope>
    <scope>MUTAGENESIS OF LEU-41; MET-62; GLY-111; PHE-115 AND ASN-340</scope>
    <scope>BIOTECHNOLOGY</scope>
</reference>
<comment type="function">
    <text evidence="3">Acts as a depside 2-O-glucosyltransferase that catalyzes the first glycosylation step during phaeomoniecin D biosynthesis by producing the intermediate exophillic acid which is further O-galactosylated into phaeomoniecin D by the C-galactosyltransferase OGT2.</text>
</comment>
<comment type="catalytic activity">
    <reaction evidence="3">
        <text>exophillate aglycone + UDP-alpha-D-glucose = exophillate + UDP + H(+)</text>
        <dbReference type="Rhea" id="RHEA:82179"/>
        <dbReference type="ChEBI" id="CHEBI:15378"/>
        <dbReference type="ChEBI" id="CHEBI:58223"/>
        <dbReference type="ChEBI" id="CHEBI:58885"/>
        <dbReference type="ChEBI" id="CHEBI:232028"/>
        <dbReference type="ChEBI" id="CHEBI:232029"/>
    </reaction>
    <physiologicalReaction direction="left-to-right" evidence="3">
        <dbReference type="Rhea" id="RHEA:82180"/>
    </physiologicalReaction>
</comment>
<comment type="pathway">
    <text evidence="3">Secondary metabolite biosynthesis.</text>
</comment>
<comment type="subcellular location">
    <subcellularLocation>
        <location evidence="1">Membrane</location>
        <topology evidence="1">Single-pass membrane protein</topology>
    </subcellularLocation>
</comment>
<comment type="biotechnology">
    <text evidence="3">Phaeomoniecin D was found to show anti-HIV activity, antibacterial activity against methicillin-resistant Staphylococcus aureus (MRSA), alpha-glucosidase inhibitory activity, as well as significant protein tyrosine phosphatase 1B (PTP1B) inhibitory activity and thus is a promising candidate for drug discovery projects.</text>
</comment>
<comment type="similarity">
    <text evidence="5">Belongs to the glycosyltransferase 28 family.</text>
</comment>
<keyword id="KW-0325">Glycoprotein</keyword>
<keyword id="KW-0328">Glycosyltransferase</keyword>
<keyword id="KW-0472">Membrane</keyword>
<keyword id="KW-1185">Reference proteome</keyword>
<keyword id="KW-0808">Transferase</keyword>
<keyword id="KW-0812">Transmembrane</keyword>
<keyword id="KW-1133">Transmembrane helix</keyword>
<feature type="chain" id="PRO_0000461510" description="UDP-glycosyltransferase 1">
    <location>
        <begin position="1"/>
        <end position="482"/>
    </location>
</feature>
<feature type="transmembrane region" description="Helical" evidence="1">
    <location>
        <begin position="450"/>
        <end position="470"/>
    </location>
</feature>
<feature type="glycosylation site" description="N-linked (GlcNAc...) asparagine" evidence="2">
    <location>
        <position position="243"/>
    </location>
</feature>
<feature type="mutagenesis site" description="Reduces the catalytic activity and does not lead to the ability to perform C-glycosylation." evidence="3">
    <original>L</original>
    <variation>F</variation>
    <location>
        <position position="41"/>
    </location>
</feature>
<feature type="mutagenesis site" description="Reduces the catalytic activity and does not lead to the ability to perform C-glycosylation." evidence="3">
    <original>M</original>
    <variation>F</variation>
    <location>
        <position position="62"/>
    </location>
</feature>
<feature type="mutagenesis site" description="Reduces the catalytic activity and does not lead to the ability to perform C-glycosylation." evidence="3">
    <original>G</original>
    <variation>P</variation>
    <location>
        <position position="111"/>
    </location>
</feature>
<feature type="mutagenesis site" description="Reduces the catalytic activity and does not lead to the ability to perform C-glycosylation." evidence="3">
    <original>F</original>
    <variation>I</variation>
    <location>
        <position position="115"/>
    </location>
</feature>
<feature type="mutagenesis site" description="Abolishes the catalytic activity and does not lead to the ability to perform C-glycosylation." evidence="3">
    <original>N</original>
    <variation>G</variation>
    <location>
        <position position="340"/>
    </location>
</feature>